<comment type="function">
    <text evidence="1">DNA-dependent RNA polymerase catalyzes the transcription of DNA into RNA using the four ribonucleoside triphosphates as substrates. Largest and catalytic component of RNA polymerase II which synthesizes mRNA precursors and many functional non-coding RNAs. Forms the polymerase active center together with the second largest subunit. Pol II is the central component of the basal RNA polymerase II transcription machinery. It is composed of mobile elements that move relative to each other. RPB1 is part of the core element with the central large cleft, the clamp element that moves to open and close the cleft and the jaws that are thought to grab the incoming DNA template. At the start of transcription, a single-stranded DNA template strand of the promoter is positioned within the central active site cleft of Pol II. A bridging helix emanates from RPB1 and crosses the cleft near the catalytic site and is thought to promote translocation of Pol II by acting as a ratchet that moves the RNA-DNA hybrid through the active site by switching from straight to bent conformations at each step of nucleotide addition. During transcription elongation, Pol II moves on the template as the transcript elongates. Elongation is influenced by the phosphorylation status of the C-terminal domain (CTD) of Pol II largest subunit (RPB1), which serves as a platform for assembly of factors that regulate transcription initiation, elongation, termination and mRNA processing (By similarity).</text>
</comment>
<comment type="catalytic activity">
    <reaction>
        <text>RNA(n) + a ribonucleoside 5'-triphosphate = RNA(n+1) + diphosphate</text>
        <dbReference type="Rhea" id="RHEA:21248"/>
        <dbReference type="Rhea" id="RHEA-COMP:14527"/>
        <dbReference type="Rhea" id="RHEA-COMP:17342"/>
        <dbReference type="ChEBI" id="CHEBI:33019"/>
        <dbReference type="ChEBI" id="CHEBI:61557"/>
        <dbReference type="ChEBI" id="CHEBI:140395"/>
        <dbReference type="EC" id="2.7.7.6"/>
    </reaction>
</comment>
<comment type="subunit">
    <text evidence="1">Component of the RNA polymerase II (Pol II) complex consisting of 12 subunits.</text>
</comment>
<comment type="subcellular location">
    <subcellularLocation>
        <location evidence="2">Nucleus</location>
    </subcellularLocation>
</comment>
<comment type="domain">
    <text evidence="5">The C-terminal domain (CTD) serves as a platform for assembly of factors that regulate transcription initiation, elongation, termination and mRNA processing.</text>
</comment>
<comment type="PTM">
    <text evidence="4">The tandem 7 residues repeats in the C-terminal domain (CTD) can be highly phosphorylated. The phosphorylation activates Pol II. Phosphorylation occurs mainly at residues 'Ser-2' and 'Ser-5' of the heptapeptide repeat. The phosphorylation state is believed to result from the balanced action of site-specific CTD kinases and phosphatase, and a 'CTD code' that specifies the position of Pol II within the transcription cycle has been proposed.</text>
</comment>
<comment type="PTM">
    <text evidence="2">Following transcription stress, the elongating form of RNA polymerase II (RNA pol IIo) is polyubiquitinated via 'Lys-63'-linkages on Lys-1252 at DNA damage sites without leading to degradation: ubiquitination promotes RNA pol IIo backtracking to allow access by the transcription-coupled nucleotide excision repair (TC-NER) machinery. Subsequent def1-dependent polyubiquitination by the elongin complex via 'Lys-48'-linkages may lead to proteasome-mediated degradation; presumably at stalled RNA pol II where TC-NER has failed, to halt global transcription and enable 'last resort' DNA repair pathways.</text>
</comment>
<comment type="miscellaneous">
    <text>The binding of ribonucleoside triphosphate to the RNA polymerase II transcribing complex probably involves a two-step mechanism. The initial binding seems to occur at the entry (E) site and involves a magnesium ion temporarily coordinated by three conserved aspartate residues of the two largest RNA Pol II subunits. The ribonucleoside triphosphate is transferred by a rotation to the nucleotide addition (A) site for pairing with the template DNA. The catalytic A site involves three conserved aspartate residues of the RNA Pol II largest subunit which permanently coordinate a second magnesium ion.</text>
</comment>
<comment type="similarity">
    <text evidence="5">Belongs to the RNA polymerase beta' chain family.</text>
</comment>
<feature type="chain" id="PRO_0000073945" description="DNA-directed RNA polymerase II subunit rpb1">
    <location>
        <begin position="1"/>
        <end position="1752"/>
    </location>
</feature>
<feature type="repeat" description="1">
    <location>
        <begin position="1558"/>
        <end position="1564"/>
    </location>
</feature>
<feature type="repeat" description="2">
    <location>
        <begin position="1578"/>
        <end position="1584"/>
    </location>
</feature>
<feature type="repeat" description="3">
    <location>
        <begin position="1585"/>
        <end position="1591"/>
    </location>
</feature>
<feature type="repeat" description="4">
    <location>
        <begin position="1592"/>
        <end position="1598"/>
    </location>
</feature>
<feature type="repeat" description="5">
    <location>
        <begin position="1599"/>
        <end position="1605"/>
    </location>
</feature>
<feature type="repeat" description="6; approximate">
    <location>
        <begin position="1606"/>
        <end position="1612"/>
    </location>
</feature>
<feature type="repeat" description="7">
    <location>
        <begin position="1613"/>
        <end position="1619"/>
    </location>
</feature>
<feature type="repeat" description="8">
    <location>
        <begin position="1620"/>
        <end position="1626"/>
    </location>
</feature>
<feature type="repeat" description="9">
    <location>
        <begin position="1627"/>
        <end position="1633"/>
    </location>
</feature>
<feature type="repeat" description="10">
    <location>
        <begin position="1634"/>
        <end position="1640"/>
    </location>
</feature>
<feature type="repeat" description="11">
    <location>
        <begin position="1641"/>
        <end position="1647"/>
    </location>
</feature>
<feature type="repeat" description="12">
    <location>
        <begin position="1648"/>
        <end position="1654"/>
    </location>
</feature>
<feature type="repeat" description="13">
    <location>
        <begin position="1655"/>
        <end position="1661"/>
    </location>
</feature>
<feature type="repeat" description="14">
    <location>
        <begin position="1662"/>
        <end position="1668"/>
    </location>
</feature>
<feature type="repeat" description="15">
    <location>
        <begin position="1669"/>
        <end position="1675"/>
    </location>
</feature>
<feature type="repeat" description="16">
    <location>
        <begin position="1676"/>
        <end position="1682"/>
    </location>
</feature>
<feature type="repeat" description="17">
    <location>
        <begin position="1683"/>
        <end position="1689"/>
    </location>
</feature>
<feature type="repeat" description="18">
    <location>
        <begin position="1690"/>
        <end position="1696"/>
    </location>
</feature>
<feature type="repeat" description="19">
    <location>
        <begin position="1697"/>
        <end position="1703"/>
    </location>
</feature>
<feature type="repeat" description="20">
    <location>
        <begin position="1704"/>
        <end position="1710"/>
    </location>
</feature>
<feature type="repeat" description="21">
    <location>
        <begin position="1711"/>
        <end position="1717"/>
    </location>
</feature>
<feature type="repeat" description="22">
    <location>
        <begin position="1718"/>
        <end position="1724"/>
    </location>
</feature>
<feature type="repeat" description="23">
    <location>
        <begin position="1725"/>
        <end position="1731"/>
    </location>
</feature>
<feature type="repeat" description="24">
    <location>
        <begin position="1732"/>
        <end position="1738"/>
    </location>
</feature>
<feature type="repeat" description="25">
    <location>
        <begin position="1739"/>
        <end position="1745"/>
    </location>
</feature>
<feature type="repeat" description="26">
    <location>
        <begin position="1746"/>
        <end position="1752"/>
    </location>
</feature>
<feature type="region of interest" description="Bridging helix">
    <location>
        <begin position="816"/>
        <end position="828"/>
    </location>
</feature>
<feature type="region of interest" description="Disordered" evidence="3">
    <location>
        <begin position="1554"/>
        <end position="1752"/>
    </location>
</feature>
<feature type="region of interest" description="C-terminal domain (CTD); 26 X 7 AA approximate tandem repeats of Y-S-P-[TS]-S-P-S">
    <location>
        <begin position="1558"/>
        <end position="1752"/>
    </location>
</feature>
<feature type="binding site" evidence="2">
    <location>
        <position position="69"/>
    </location>
    <ligand>
        <name>Zn(2+)</name>
        <dbReference type="ChEBI" id="CHEBI:29105"/>
        <label>1</label>
    </ligand>
</feature>
<feature type="binding site" evidence="2">
    <location>
        <position position="72"/>
    </location>
    <ligand>
        <name>Zn(2+)</name>
        <dbReference type="ChEBI" id="CHEBI:29105"/>
        <label>1</label>
    </ligand>
</feature>
<feature type="binding site" evidence="2">
    <location>
        <position position="79"/>
    </location>
    <ligand>
        <name>Zn(2+)</name>
        <dbReference type="ChEBI" id="CHEBI:29105"/>
        <label>1</label>
    </ligand>
</feature>
<feature type="binding site" evidence="2">
    <location>
        <position position="82"/>
    </location>
    <ligand>
        <name>Zn(2+)</name>
        <dbReference type="ChEBI" id="CHEBI:29105"/>
        <label>1</label>
    </ligand>
</feature>
<feature type="binding site" evidence="2">
    <location>
        <position position="109"/>
    </location>
    <ligand>
        <name>Zn(2+)</name>
        <dbReference type="ChEBI" id="CHEBI:29105"/>
        <label>2</label>
    </ligand>
</feature>
<feature type="binding site" evidence="2">
    <location>
        <position position="112"/>
    </location>
    <ligand>
        <name>Zn(2+)</name>
        <dbReference type="ChEBI" id="CHEBI:29105"/>
        <label>2</label>
    </ligand>
</feature>
<feature type="binding site" evidence="2">
    <location>
        <position position="150"/>
    </location>
    <ligand>
        <name>Zn(2+)</name>
        <dbReference type="ChEBI" id="CHEBI:29105"/>
        <label>2</label>
    </ligand>
</feature>
<feature type="binding site" evidence="2">
    <location>
        <position position="175"/>
    </location>
    <ligand>
        <name>Zn(2+)</name>
        <dbReference type="ChEBI" id="CHEBI:29105"/>
        <label>2</label>
    </ligand>
</feature>
<feature type="binding site" evidence="2">
    <location>
        <position position="487"/>
    </location>
    <ligand>
        <name>Mg(2+)</name>
        <dbReference type="ChEBI" id="CHEBI:18420"/>
        <label>1</label>
        <note>catalytic</note>
    </ligand>
</feature>
<feature type="binding site" evidence="2">
    <location>
        <position position="487"/>
    </location>
    <ligand>
        <name>Mg(2+)</name>
        <dbReference type="ChEBI" id="CHEBI:18420"/>
        <label>2</label>
        <note>ligand shared with RPB2</note>
    </ligand>
</feature>
<feature type="binding site" evidence="2">
    <location>
        <position position="489"/>
    </location>
    <ligand>
        <name>Mg(2+)</name>
        <dbReference type="ChEBI" id="CHEBI:18420"/>
        <label>1</label>
        <note>catalytic</note>
    </ligand>
</feature>
<feature type="binding site" evidence="2">
    <location>
        <position position="489"/>
    </location>
    <ligand>
        <name>Mg(2+)</name>
        <dbReference type="ChEBI" id="CHEBI:18420"/>
        <label>2</label>
        <note>ligand shared with RPB2</note>
    </ligand>
</feature>
<feature type="binding site" evidence="2">
    <location>
        <position position="491"/>
    </location>
    <ligand>
        <name>Mg(2+)</name>
        <dbReference type="ChEBI" id="CHEBI:18420"/>
        <label>1</label>
        <note>catalytic</note>
    </ligand>
</feature>
<feature type="modified residue" description="Phosphoserine" evidence="4">
    <location>
        <position position="1489"/>
    </location>
</feature>
<feature type="modified residue" description="Phosphoserine" evidence="4">
    <location>
        <position position="1499"/>
    </location>
</feature>
<feature type="modified residue" description="Phosphoserine" evidence="4">
    <location>
        <position position="1506"/>
    </location>
</feature>
<feature type="modified residue" description="Phosphoserine" evidence="4">
    <location>
        <position position="1529"/>
    </location>
</feature>
<feature type="modified residue" description="Phosphotyrosine" evidence="4">
    <location>
        <position position="1531"/>
    </location>
</feature>
<feature type="cross-link" description="Glycyl lysine isopeptide (Lys-Gly) (interchain with G-Cter in ubiquitin)" evidence="2">
    <location>
        <position position="1252"/>
    </location>
</feature>
<feature type="strand" evidence="6">
    <location>
        <begin position="18"/>
        <end position="20"/>
    </location>
</feature>
<feature type="helix" evidence="6">
    <location>
        <begin position="26"/>
        <end position="32"/>
    </location>
</feature>
<feature type="strand" evidence="6">
    <location>
        <begin position="34"/>
        <end position="36"/>
    </location>
</feature>
<feature type="strand" evidence="6">
    <location>
        <begin position="48"/>
        <end position="50"/>
    </location>
</feature>
<feature type="strand" evidence="6">
    <location>
        <begin position="54"/>
        <end position="56"/>
    </location>
</feature>
<feature type="helix" evidence="6">
    <location>
        <begin position="58"/>
        <end position="60"/>
    </location>
</feature>
<feature type="strand" evidence="6">
    <location>
        <begin position="65"/>
        <end position="67"/>
    </location>
</feature>
<feature type="turn" evidence="6">
    <location>
        <begin position="70"/>
        <end position="72"/>
    </location>
</feature>
<feature type="turn" evidence="6">
    <location>
        <begin position="76"/>
        <end position="78"/>
    </location>
</feature>
<feature type="strand" evidence="6">
    <location>
        <begin position="84"/>
        <end position="93"/>
    </location>
</feature>
<feature type="helix" evidence="6">
    <location>
        <begin position="95"/>
        <end position="97"/>
    </location>
</feature>
<feature type="helix" evidence="6">
    <location>
        <begin position="98"/>
        <end position="107"/>
    </location>
</feature>
<feature type="strand" evidence="6">
    <location>
        <begin position="110"/>
        <end position="112"/>
    </location>
</feature>
<feature type="helix" evidence="6">
    <location>
        <begin position="122"/>
        <end position="128"/>
    </location>
</feature>
<feature type="helix" evidence="6">
    <location>
        <begin position="133"/>
        <end position="144"/>
    </location>
</feature>
<feature type="helix" evidence="6">
    <location>
        <begin position="166"/>
        <end position="168"/>
    </location>
</feature>
<feature type="strand" evidence="6">
    <location>
        <begin position="181"/>
        <end position="185"/>
    </location>
</feature>
<feature type="strand" evidence="6">
    <location>
        <begin position="188"/>
        <end position="193"/>
    </location>
</feature>
<feature type="strand" evidence="6">
    <location>
        <begin position="199"/>
        <end position="201"/>
    </location>
</feature>
<feature type="strand" evidence="6">
    <location>
        <begin position="204"/>
        <end position="208"/>
    </location>
</feature>
<feature type="helix" evidence="6">
    <location>
        <begin position="210"/>
        <end position="218"/>
    </location>
</feature>
<feature type="helix" evidence="6">
    <location>
        <begin position="222"/>
        <end position="228"/>
    </location>
</feature>
<feature type="turn" evidence="6">
    <location>
        <begin position="232"/>
        <end position="234"/>
    </location>
</feature>
<feature type="helix" evidence="6">
    <location>
        <begin position="237"/>
        <end position="240"/>
    </location>
</feature>
<feature type="strand" evidence="6">
    <location>
        <begin position="241"/>
        <end position="247"/>
    </location>
</feature>
<feature type="turn" evidence="6">
    <location>
        <begin position="250"/>
        <end position="252"/>
    </location>
</feature>
<feature type="strand" evidence="6">
    <location>
        <begin position="259"/>
        <end position="261"/>
    </location>
</feature>
<feature type="helix" evidence="6">
    <location>
        <begin position="267"/>
        <end position="288"/>
    </location>
</feature>
<feature type="helix" evidence="6">
    <location>
        <begin position="292"/>
        <end position="310"/>
    </location>
</feature>
<feature type="helix" evidence="6">
    <location>
        <begin position="331"/>
        <end position="335"/>
    </location>
</feature>
<feature type="helix" evidence="6">
    <location>
        <begin position="341"/>
        <end position="344"/>
    </location>
</feature>
<feature type="strand" evidence="6">
    <location>
        <begin position="346"/>
        <end position="361"/>
    </location>
</feature>
<feature type="strand" evidence="6">
    <location>
        <begin position="369"/>
        <end position="373"/>
    </location>
</feature>
<feature type="helix" evidence="6">
    <location>
        <begin position="374"/>
        <end position="379"/>
    </location>
</feature>
<feature type="strand" evidence="6">
    <location>
        <begin position="381"/>
        <end position="385"/>
    </location>
</feature>
<feature type="turn" evidence="6">
    <location>
        <begin position="388"/>
        <end position="390"/>
    </location>
</feature>
<feature type="helix" evidence="6">
    <location>
        <begin position="391"/>
        <end position="400"/>
    </location>
</feature>
<feature type="strand" evidence="6">
    <location>
        <begin position="404"/>
        <end position="406"/>
    </location>
</feature>
<feature type="strand" evidence="6">
    <location>
        <begin position="408"/>
        <end position="412"/>
    </location>
</feature>
<feature type="strand" evidence="6">
    <location>
        <begin position="418"/>
        <end position="420"/>
    </location>
</feature>
<feature type="turn" evidence="6">
    <location>
        <begin position="421"/>
        <end position="423"/>
    </location>
</feature>
<feature type="helix" evidence="6">
    <location>
        <begin position="427"/>
        <end position="429"/>
    </location>
</feature>
<feature type="strand" evidence="6">
    <location>
        <begin position="437"/>
        <end position="441"/>
    </location>
</feature>
<feature type="strand" evidence="6">
    <location>
        <begin position="447"/>
        <end position="451"/>
    </location>
</feature>
<feature type="helix" evidence="6">
    <location>
        <begin position="458"/>
        <end position="460"/>
    </location>
</feature>
<feature type="strand" evidence="6">
    <location>
        <begin position="461"/>
        <end position="476"/>
    </location>
</feature>
<feature type="helix" evidence="6">
    <location>
        <begin position="478"/>
        <end position="480"/>
    </location>
</feature>
<feature type="helix" evidence="6">
    <location>
        <begin position="481"/>
        <end position="484"/>
    </location>
</feature>
<feature type="turn" evidence="6">
    <location>
        <begin position="488"/>
        <end position="490"/>
    </location>
</feature>
<feature type="strand" evidence="6">
    <location>
        <begin position="492"/>
        <end position="496"/>
    </location>
</feature>
<feature type="helix" evidence="6">
    <location>
        <begin position="501"/>
        <end position="509"/>
    </location>
</feature>
<feature type="helix" evidence="6">
    <location>
        <begin position="514"/>
        <end position="516"/>
    </location>
</feature>
<feature type="strand" evidence="6">
    <location>
        <begin position="517"/>
        <end position="519"/>
    </location>
</feature>
<feature type="turn" evidence="6">
    <location>
        <begin position="520"/>
        <end position="523"/>
    </location>
</feature>
<feature type="strand" evidence="6">
    <location>
        <begin position="524"/>
        <end position="526"/>
    </location>
</feature>
<feature type="helix" evidence="6">
    <location>
        <begin position="532"/>
        <end position="540"/>
    </location>
</feature>
<feature type="helix" evidence="6">
    <location>
        <begin position="549"/>
        <end position="555"/>
    </location>
</feature>
<feature type="helix" evidence="6">
    <location>
        <begin position="556"/>
        <end position="558"/>
    </location>
</feature>
<feature type="strand" evidence="6">
    <location>
        <begin position="570"/>
        <end position="575"/>
    </location>
</feature>
<feature type="strand" evidence="6">
    <location>
        <begin position="577"/>
        <end position="579"/>
    </location>
</feature>
<feature type="helix" evidence="6">
    <location>
        <begin position="580"/>
        <end position="584"/>
    </location>
</feature>
<feature type="turn" evidence="6">
    <location>
        <begin position="585"/>
        <end position="587"/>
    </location>
</feature>
<feature type="strand" evidence="6">
    <location>
        <begin position="594"/>
        <end position="596"/>
    </location>
</feature>
<feature type="strand" evidence="6">
    <location>
        <begin position="598"/>
        <end position="601"/>
    </location>
</feature>
<feature type="strand" evidence="6">
    <location>
        <begin position="610"/>
        <end position="614"/>
    </location>
</feature>
<feature type="strand" evidence="6">
    <location>
        <begin position="617"/>
        <end position="620"/>
    </location>
</feature>
<feature type="helix" evidence="6">
    <location>
        <begin position="625"/>
        <end position="628"/>
    </location>
</feature>
<feature type="helix" evidence="6">
    <location>
        <begin position="635"/>
        <end position="643"/>
    </location>
</feature>
<feature type="helix" evidence="6">
    <location>
        <begin position="645"/>
        <end position="664"/>
    </location>
</feature>
<feature type="helix" evidence="6">
    <location>
        <begin position="672"/>
        <end position="675"/>
    </location>
</feature>
<feature type="helix" evidence="6">
    <location>
        <begin position="679"/>
        <end position="703"/>
    </location>
</feature>
<feature type="turn" evidence="6">
    <location>
        <begin position="704"/>
        <end position="706"/>
    </location>
</feature>
<feature type="helix" evidence="6">
    <location>
        <begin position="716"/>
        <end position="742"/>
    </location>
</feature>
<feature type="helix" evidence="6">
    <location>
        <begin position="748"/>
        <end position="755"/>
    </location>
</feature>
<feature type="helix" evidence="6">
    <location>
        <begin position="761"/>
        <end position="768"/>
    </location>
</feature>
<feature type="strand" evidence="6">
    <location>
        <begin position="785"/>
        <end position="790"/>
    </location>
</feature>
<feature type="turn" evidence="6">
    <location>
        <begin position="800"/>
        <end position="804"/>
    </location>
</feature>
<feature type="turn" evidence="6">
    <location>
        <begin position="810"/>
        <end position="812"/>
    </location>
</feature>
<feature type="helix" evidence="6">
    <location>
        <begin position="816"/>
        <end position="851"/>
    </location>
</feature>
<feature type="strand" evidence="6">
    <location>
        <begin position="869"/>
        <end position="873"/>
    </location>
</feature>
<feature type="helix" evidence="6">
    <location>
        <begin position="874"/>
        <end position="876"/>
    </location>
</feature>
<feature type="helix" evidence="6">
    <location>
        <begin position="881"/>
        <end position="883"/>
    </location>
</feature>
<feature type="strand" evidence="6">
    <location>
        <begin position="884"/>
        <end position="888"/>
    </location>
</feature>
<feature type="helix" evidence="6">
    <location>
        <begin position="890"/>
        <end position="893"/>
    </location>
</feature>
<feature type="helix" evidence="6">
    <location>
        <begin position="896"/>
        <end position="903"/>
    </location>
</feature>
<feature type="turn" evidence="6">
    <location>
        <begin position="907"/>
        <end position="909"/>
    </location>
</feature>
<feature type="helix" evidence="6">
    <location>
        <begin position="912"/>
        <end position="915"/>
    </location>
</feature>
<feature type="strand" evidence="6">
    <location>
        <begin position="917"/>
        <end position="919"/>
    </location>
</feature>
<feature type="helix" evidence="6">
    <location>
        <begin position="925"/>
        <end position="947"/>
    </location>
</feature>
<feature type="strand" evidence="6">
    <location>
        <begin position="956"/>
        <end position="961"/>
    </location>
</feature>
<feature type="helix" evidence="6">
    <location>
        <begin position="963"/>
        <end position="973"/>
    </location>
</feature>
<feature type="helix" evidence="6">
    <location>
        <begin position="986"/>
        <end position="998"/>
    </location>
</feature>
<feature type="helix" evidence="6">
    <location>
        <begin position="1008"/>
        <end position="1017"/>
    </location>
</feature>
<feature type="helix" evidence="6">
    <location>
        <begin position="1019"/>
        <end position="1028"/>
    </location>
</feature>
<feature type="helix" evidence="6">
    <location>
        <begin position="1031"/>
        <end position="1036"/>
    </location>
</feature>
<feature type="helix" evidence="6">
    <location>
        <begin position="1042"/>
        <end position="1059"/>
    </location>
</feature>
<feature type="helix" evidence="6">
    <location>
        <begin position="1067"/>
        <end position="1079"/>
    </location>
</feature>
<feature type="helix" evidence="6">
    <location>
        <begin position="1101"/>
        <end position="1109"/>
    </location>
</feature>
<feature type="strand" evidence="6">
    <location>
        <begin position="1119"/>
        <end position="1123"/>
    </location>
</feature>
<feature type="helix" evidence="6">
    <location>
        <begin position="1125"/>
        <end position="1128"/>
    </location>
</feature>
<feature type="helix" evidence="6">
    <location>
        <begin position="1131"/>
        <end position="1141"/>
    </location>
</feature>
<feature type="helix" evidence="6">
    <location>
        <begin position="1146"/>
        <end position="1149"/>
    </location>
</feature>
<feature type="strand" evidence="6">
    <location>
        <begin position="1150"/>
        <end position="1157"/>
    </location>
</feature>
<feature type="strand" evidence="6">
    <location>
        <begin position="1161"/>
        <end position="1163"/>
    </location>
</feature>
<feature type="helix" evidence="6">
    <location>
        <begin position="1167"/>
        <end position="1169"/>
    </location>
</feature>
<feature type="helix" evidence="6">
    <location>
        <begin position="1170"/>
        <end position="1178"/>
    </location>
</feature>
<feature type="helix" evidence="6">
    <location>
        <begin position="1182"/>
        <end position="1187"/>
    </location>
</feature>
<feature type="helix" evidence="6">
    <location>
        <begin position="1188"/>
        <end position="1190"/>
    </location>
</feature>
<feature type="strand" evidence="6">
    <location>
        <begin position="1193"/>
        <end position="1200"/>
    </location>
</feature>
<feature type="helix" evidence="6">
    <location>
        <begin position="1202"/>
        <end position="1208"/>
    </location>
</feature>
<feature type="helix" evidence="6">
    <location>
        <begin position="1212"/>
        <end position="1223"/>
    </location>
</feature>
<feature type="turn" evidence="6">
    <location>
        <begin position="1224"/>
        <end position="1226"/>
    </location>
</feature>
<feature type="strand" evidence="6">
    <location>
        <begin position="1227"/>
        <end position="1231"/>
    </location>
</feature>
<feature type="strand" evidence="6">
    <location>
        <begin position="1236"/>
        <end position="1246"/>
    </location>
</feature>
<feature type="turn" evidence="6">
    <location>
        <begin position="1256"/>
        <end position="1258"/>
    </location>
</feature>
<feature type="helix" evidence="6">
    <location>
        <begin position="1262"/>
        <end position="1275"/>
    </location>
</feature>
<feature type="strand" evidence="6">
    <location>
        <begin position="1278"/>
        <end position="1281"/>
    </location>
</feature>
<feature type="strand" evidence="6">
    <location>
        <begin position="1287"/>
        <end position="1298"/>
    </location>
</feature>
<feature type="strand" evidence="6">
    <location>
        <begin position="1304"/>
        <end position="1316"/>
    </location>
</feature>
<feature type="helix" evidence="6">
    <location>
        <begin position="1319"/>
        <end position="1324"/>
    </location>
</feature>
<feature type="turn" evidence="6">
    <location>
        <begin position="1330"/>
        <end position="1332"/>
    </location>
</feature>
<feature type="strand" evidence="6">
    <location>
        <begin position="1334"/>
        <end position="1336"/>
    </location>
</feature>
<feature type="helix" evidence="6">
    <location>
        <begin position="1338"/>
        <end position="1345"/>
    </location>
</feature>
<feature type="helix" evidence="6">
    <location>
        <begin position="1347"/>
        <end position="1363"/>
    </location>
</feature>
<feature type="turn" evidence="6">
    <location>
        <begin position="1364"/>
        <end position="1366"/>
    </location>
</feature>
<feature type="helix" evidence="6">
    <location>
        <begin position="1371"/>
        <end position="1382"/>
    </location>
</feature>
<feature type="helix" evidence="6">
    <location>
        <begin position="1392"/>
        <end position="1397"/>
    </location>
</feature>
<feature type="helix" evidence="6">
    <location>
        <begin position="1402"/>
        <end position="1406"/>
    </location>
</feature>
<feature type="turn" evidence="6">
    <location>
        <begin position="1407"/>
        <end position="1409"/>
    </location>
</feature>
<feature type="helix" evidence="6">
    <location>
        <begin position="1411"/>
        <end position="1420"/>
    </location>
</feature>
<feature type="helix" evidence="6">
    <location>
        <begin position="1430"/>
        <end position="1435"/>
    </location>
</feature>
<feature type="helix" evidence="6">
    <location>
        <begin position="1443"/>
        <end position="1445"/>
    </location>
</feature>
<feature type="strand" evidence="6">
    <location>
        <begin position="1446"/>
        <end position="1451"/>
    </location>
</feature>
<feature type="helix" evidence="6">
    <location>
        <begin position="1453"/>
        <end position="1457"/>
    </location>
</feature>
<dbReference type="EC" id="2.7.7.6"/>
<dbReference type="EMBL" id="X56564">
    <property type="protein sequence ID" value="CAA39916.1"/>
    <property type="molecule type" value="Genomic_DNA"/>
</dbReference>
<dbReference type="EMBL" id="CU329671">
    <property type="protein sequence ID" value="CAB57941.1"/>
    <property type="molecule type" value="Genomic_DNA"/>
</dbReference>
<dbReference type="PIR" id="S26849">
    <property type="entry name" value="S26849"/>
</dbReference>
<dbReference type="RefSeq" id="NP_595673.1">
    <property type="nucleotide sequence ID" value="NM_001021568.2"/>
</dbReference>
<dbReference type="PDB" id="3H0G">
    <property type="method" value="X-ray"/>
    <property type="resolution" value="3.65 A"/>
    <property type="chains" value="A/M=1-1752"/>
</dbReference>
<dbReference type="PDB" id="4PZ6">
    <property type="method" value="X-ray"/>
    <property type="resolution" value="2.41 A"/>
    <property type="chains" value="P/Q=1704-1724"/>
</dbReference>
<dbReference type="PDB" id="5U0S">
    <property type="method" value="EM"/>
    <property type="resolution" value="7.80 A"/>
    <property type="chains" value="a=1-1752"/>
</dbReference>
<dbReference type="PDB" id="8QSZ">
    <property type="method" value="EM"/>
    <property type="resolution" value="2.67 A"/>
    <property type="chains" value="A=1-1752"/>
</dbReference>
<dbReference type="PDBsum" id="3H0G"/>
<dbReference type="PDBsum" id="4PZ6"/>
<dbReference type="PDBsum" id="5U0S"/>
<dbReference type="PDBsum" id="8QSZ"/>
<dbReference type="EMDB" id="EMD-18643"/>
<dbReference type="EMDB" id="EMD-8480"/>
<dbReference type="SMR" id="P36594"/>
<dbReference type="BioGRID" id="276823">
    <property type="interactions" value="168"/>
</dbReference>
<dbReference type="ComplexPortal" id="CPX-2661">
    <property type="entry name" value="DNA-directed RNA polymerase II complex"/>
</dbReference>
<dbReference type="FunCoup" id="P36594">
    <property type="interactions" value="544"/>
</dbReference>
<dbReference type="IntAct" id="P36594">
    <property type="interactions" value="9"/>
</dbReference>
<dbReference type="MINT" id="P36594"/>
<dbReference type="STRING" id="284812.P36594"/>
<dbReference type="iPTMnet" id="P36594"/>
<dbReference type="PaxDb" id="4896-SPBC28F2.12.1"/>
<dbReference type="EnsemblFungi" id="SPBC28F2.12.1">
    <property type="protein sequence ID" value="SPBC28F2.12.1:pep"/>
    <property type="gene ID" value="SPBC28F2.12"/>
</dbReference>
<dbReference type="GeneID" id="2540292"/>
<dbReference type="KEGG" id="spo:2540292"/>
<dbReference type="PomBase" id="SPBC28F2.12">
    <property type="gene designation" value="rpb1"/>
</dbReference>
<dbReference type="VEuPathDB" id="FungiDB:SPBC28F2.12"/>
<dbReference type="eggNOG" id="KOG0260">
    <property type="taxonomic scope" value="Eukaryota"/>
</dbReference>
<dbReference type="HOGENOM" id="CLU_000487_3_0_1"/>
<dbReference type="InParanoid" id="P36594"/>
<dbReference type="OMA" id="KPCMGIV"/>
<dbReference type="PhylomeDB" id="P36594"/>
<dbReference type="BRENDA" id="2.7.7.6">
    <property type="organism ID" value="5613"/>
</dbReference>
<dbReference type="Reactome" id="R-SPO-113418">
    <property type="pathway name" value="Formation of the Early Elongation Complex"/>
</dbReference>
<dbReference type="Reactome" id="R-SPO-5578749">
    <property type="pathway name" value="Transcriptional regulation by small RNAs"/>
</dbReference>
<dbReference type="Reactome" id="R-SPO-674695">
    <property type="pathway name" value="RNA Polymerase II Pre-transcription Events"/>
</dbReference>
<dbReference type="Reactome" id="R-SPO-6781823">
    <property type="pathway name" value="Formation of TC-NER Pre-Incision Complex"/>
</dbReference>
<dbReference type="Reactome" id="R-SPO-6782135">
    <property type="pathway name" value="Dual incision in TC-NER"/>
</dbReference>
<dbReference type="Reactome" id="R-SPO-6782210">
    <property type="pathway name" value="Gap-filling DNA repair synthesis and ligation in TC-NER"/>
</dbReference>
<dbReference type="Reactome" id="R-SPO-6796648">
    <property type="pathway name" value="TP53 Regulates Transcription of DNA Repair Genes"/>
</dbReference>
<dbReference type="Reactome" id="R-SPO-6807505">
    <property type="pathway name" value="RNA polymerase II transcribes snRNA genes"/>
</dbReference>
<dbReference type="Reactome" id="R-SPO-72086">
    <property type="pathway name" value="mRNA Capping"/>
</dbReference>
<dbReference type="Reactome" id="R-SPO-72163">
    <property type="pathway name" value="mRNA Splicing - Major Pathway"/>
</dbReference>
<dbReference type="Reactome" id="R-SPO-72203">
    <property type="pathway name" value="Processing of Capped Intron-Containing Pre-mRNA"/>
</dbReference>
<dbReference type="Reactome" id="R-SPO-73776">
    <property type="pathway name" value="RNA Polymerase II Promoter Escape"/>
</dbReference>
<dbReference type="Reactome" id="R-SPO-73779">
    <property type="pathway name" value="RNA Polymerase II Transcription Pre-Initiation And Promoter Opening"/>
</dbReference>
<dbReference type="Reactome" id="R-SPO-75953">
    <property type="pathway name" value="RNA Polymerase II Transcription Initiation"/>
</dbReference>
<dbReference type="Reactome" id="R-SPO-76042">
    <property type="pathway name" value="RNA Polymerase II Transcription Initiation And Promoter Clearance"/>
</dbReference>
<dbReference type="Reactome" id="R-SPO-77075">
    <property type="pathway name" value="RNA Pol II CTD phosphorylation and interaction with CE"/>
</dbReference>
<dbReference type="Reactome" id="R-SPO-9018519">
    <property type="pathway name" value="Estrogen-dependent gene expression"/>
</dbReference>
<dbReference type="EvolutionaryTrace" id="P36594"/>
<dbReference type="PRO" id="PR:P36594"/>
<dbReference type="Proteomes" id="UP000002485">
    <property type="component" value="Chromosome II"/>
</dbReference>
<dbReference type="GO" id="GO:0000785">
    <property type="term" value="C:chromatin"/>
    <property type="evidence" value="ECO:0000314"/>
    <property type="project" value="PomBase"/>
</dbReference>
<dbReference type="GO" id="GO:0005739">
    <property type="term" value="C:mitochondrion"/>
    <property type="evidence" value="ECO:0007669"/>
    <property type="project" value="GOC"/>
</dbReference>
<dbReference type="GO" id="GO:0005634">
    <property type="term" value="C:nucleus"/>
    <property type="evidence" value="ECO:0007005"/>
    <property type="project" value="PomBase"/>
</dbReference>
<dbReference type="GO" id="GO:0005665">
    <property type="term" value="C:RNA polymerase II, core complex"/>
    <property type="evidence" value="ECO:0000314"/>
    <property type="project" value="PomBase"/>
</dbReference>
<dbReference type="GO" id="GO:0016591">
    <property type="term" value="C:RNA polymerase II, holoenzyme"/>
    <property type="evidence" value="ECO:0000269"/>
    <property type="project" value="PomBase"/>
</dbReference>
<dbReference type="GO" id="GO:0140463">
    <property type="term" value="F:chromatin-protein adaptor activity"/>
    <property type="evidence" value="ECO:0000314"/>
    <property type="project" value="PomBase"/>
</dbReference>
<dbReference type="GO" id="GO:0003677">
    <property type="term" value="F:DNA binding"/>
    <property type="evidence" value="ECO:0000314"/>
    <property type="project" value="PomBase"/>
</dbReference>
<dbReference type="GO" id="GO:0003899">
    <property type="term" value="F:DNA-directed RNA polymerase activity"/>
    <property type="evidence" value="ECO:0007669"/>
    <property type="project" value="UniProtKB-EC"/>
</dbReference>
<dbReference type="GO" id="GO:0046872">
    <property type="term" value="F:metal ion binding"/>
    <property type="evidence" value="ECO:0007669"/>
    <property type="project" value="UniProtKB-KW"/>
</dbReference>
<dbReference type="GO" id="GO:0006370">
    <property type="term" value="P:7-methylguanosine mRNA capping"/>
    <property type="evidence" value="ECO:0000304"/>
    <property type="project" value="PomBase"/>
</dbReference>
<dbReference type="GO" id="GO:0180034">
    <property type="term" value="P:co-transcriptional lncRNA 3' end processing, cleavage and polyadenylation pathway"/>
    <property type="evidence" value="ECO:0000315"/>
    <property type="project" value="PomBase"/>
</dbReference>
<dbReference type="GO" id="GO:0030643">
    <property type="term" value="P:intracellular phosphate ion homeostasis"/>
    <property type="evidence" value="ECO:0000315"/>
    <property type="project" value="PomBase"/>
</dbReference>
<dbReference type="GO" id="GO:0006369">
    <property type="term" value="P:termination of RNA polymerase II transcription"/>
    <property type="evidence" value="ECO:0000315"/>
    <property type="project" value="PomBase"/>
</dbReference>
<dbReference type="GO" id="GO:0006366">
    <property type="term" value="P:transcription by RNA polymerase II"/>
    <property type="evidence" value="ECO:0000269"/>
    <property type="project" value="PomBase"/>
</dbReference>
<dbReference type="GO" id="GO:0006368">
    <property type="term" value="P:transcription elongation by RNA polymerase II"/>
    <property type="evidence" value="ECO:0000304"/>
    <property type="project" value="PomBase"/>
</dbReference>
<dbReference type="GO" id="GO:0006367">
    <property type="term" value="P:transcription initiation at RNA polymerase II promoter"/>
    <property type="evidence" value="ECO:0000314"/>
    <property type="project" value="PomBase"/>
</dbReference>
<dbReference type="CDD" id="cd02584">
    <property type="entry name" value="RNAP_II_Rpb1_C"/>
    <property type="match status" value="1"/>
</dbReference>
<dbReference type="CDD" id="cd02733">
    <property type="entry name" value="RNAP_II_RPB1_N"/>
    <property type="match status" value="1"/>
</dbReference>
<dbReference type="DisProt" id="DP02514"/>
<dbReference type="FunFam" id="2.40.40.20:FF:000019">
    <property type="entry name" value="DNA-directed RNA polymerase II subunit RPB1"/>
    <property type="match status" value="1"/>
</dbReference>
<dbReference type="FunFam" id="1.10.132.30:FF:000001">
    <property type="entry name" value="DNA-directed RNA polymerase subunit"/>
    <property type="match status" value="1"/>
</dbReference>
<dbReference type="FunFam" id="1.10.150.390:FF:000001">
    <property type="entry name" value="DNA-directed RNA polymerase subunit"/>
    <property type="match status" value="1"/>
</dbReference>
<dbReference type="FunFam" id="1.10.274.100:FF:000001">
    <property type="entry name" value="DNA-directed RNA polymerase subunit"/>
    <property type="match status" value="1"/>
</dbReference>
<dbReference type="FunFam" id="3.30.1360.140:FF:000001">
    <property type="entry name" value="DNA-directed RNA polymerase subunit"/>
    <property type="match status" value="1"/>
</dbReference>
<dbReference type="FunFam" id="3.30.1490.180:FF:000001">
    <property type="entry name" value="DNA-directed RNA polymerase subunit"/>
    <property type="match status" value="1"/>
</dbReference>
<dbReference type="FunFam" id="4.10.860.120:FF:000002">
    <property type="entry name" value="DNA-directed RNA polymerase subunit"/>
    <property type="match status" value="1"/>
</dbReference>
<dbReference type="FunFam" id="4.10.860.120:FF:000003">
    <property type="entry name" value="DNA-directed RNA polymerase subunit"/>
    <property type="match status" value="1"/>
</dbReference>
<dbReference type="Gene3D" id="1.10.132.30">
    <property type="match status" value="1"/>
</dbReference>
<dbReference type="Gene3D" id="1.10.150.390">
    <property type="match status" value="1"/>
</dbReference>
<dbReference type="Gene3D" id="2.40.40.20">
    <property type="match status" value="1"/>
</dbReference>
<dbReference type="Gene3D" id="3.30.1360.140">
    <property type="match status" value="1"/>
</dbReference>
<dbReference type="Gene3D" id="6.10.250.2940">
    <property type="match status" value="1"/>
</dbReference>
<dbReference type="Gene3D" id="6.20.50.80">
    <property type="match status" value="1"/>
</dbReference>
<dbReference type="Gene3D" id="3.30.1490.180">
    <property type="entry name" value="RNA polymerase ii"/>
    <property type="match status" value="1"/>
</dbReference>
<dbReference type="Gene3D" id="4.10.860.120">
    <property type="entry name" value="RNA polymerase II, clamp domain"/>
    <property type="match status" value="2"/>
</dbReference>
<dbReference type="Gene3D" id="1.10.274.100">
    <property type="entry name" value="RNA polymerase Rpb1, domain 3"/>
    <property type="match status" value="1"/>
</dbReference>
<dbReference type="InterPro" id="IPR045867">
    <property type="entry name" value="DNA-dir_RpoC_beta_prime"/>
</dbReference>
<dbReference type="InterPro" id="IPR000722">
    <property type="entry name" value="RNA_pol_asu"/>
</dbReference>
<dbReference type="InterPro" id="IPR000684">
    <property type="entry name" value="RNA_pol_II_repeat_euk"/>
</dbReference>
<dbReference type="InterPro" id="IPR006592">
    <property type="entry name" value="RNA_pol_N"/>
</dbReference>
<dbReference type="InterPro" id="IPR007080">
    <property type="entry name" value="RNA_pol_Rpb1_1"/>
</dbReference>
<dbReference type="InterPro" id="IPR007066">
    <property type="entry name" value="RNA_pol_Rpb1_3"/>
</dbReference>
<dbReference type="InterPro" id="IPR042102">
    <property type="entry name" value="RNA_pol_Rpb1_3_sf"/>
</dbReference>
<dbReference type="InterPro" id="IPR007083">
    <property type="entry name" value="RNA_pol_Rpb1_4"/>
</dbReference>
<dbReference type="InterPro" id="IPR007081">
    <property type="entry name" value="RNA_pol_Rpb1_5"/>
</dbReference>
<dbReference type="InterPro" id="IPR007075">
    <property type="entry name" value="RNA_pol_Rpb1_6"/>
</dbReference>
<dbReference type="InterPro" id="IPR007073">
    <property type="entry name" value="RNA_pol_Rpb1_7"/>
</dbReference>
<dbReference type="InterPro" id="IPR038593">
    <property type="entry name" value="RNA_pol_Rpb1_7_sf"/>
</dbReference>
<dbReference type="InterPro" id="IPR044893">
    <property type="entry name" value="RNA_pol_Rpb1_clamp_domain"/>
</dbReference>
<dbReference type="InterPro" id="IPR038120">
    <property type="entry name" value="Rpb1_funnel_sf"/>
</dbReference>
<dbReference type="NCBIfam" id="NF006336">
    <property type="entry name" value="PRK08566.1"/>
    <property type="match status" value="1"/>
</dbReference>
<dbReference type="PANTHER" id="PTHR19376">
    <property type="entry name" value="DNA-DIRECTED RNA POLYMERASE"/>
    <property type="match status" value="1"/>
</dbReference>
<dbReference type="PANTHER" id="PTHR19376:SF37">
    <property type="entry name" value="DNA-DIRECTED RNA POLYMERASE II SUBUNIT RPB1"/>
    <property type="match status" value="1"/>
</dbReference>
<dbReference type="Pfam" id="PF04997">
    <property type="entry name" value="RNA_pol_Rpb1_1"/>
    <property type="match status" value="1"/>
</dbReference>
<dbReference type="Pfam" id="PF00623">
    <property type="entry name" value="RNA_pol_Rpb1_2"/>
    <property type="match status" value="1"/>
</dbReference>
<dbReference type="Pfam" id="PF04983">
    <property type="entry name" value="RNA_pol_Rpb1_3"/>
    <property type="match status" value="1"/>
</dbReference>
<dbReference type="Pfam" id="PF05000">
    <property type="entry name" value="RNA_pol_Rpb1_4"/>
    <property type="match status" value="1"/>
</dbReference>
<dbReference type="Pfam" id="PF04998">
    <property type="entry name" value="RNA_pol_Rpb1_5"/>
    <property type="match status" value="1"/>
</dbReference>
<dbReference type="Pfam" id="PF04992">
    <property type="entry name" value="RNA_pol_Rpb1_6"/>
    <property type="match status" value="1"/>
</dbReference>
<dbReference type="Pfam" id="PF04990">
    <property type="entry name" value="RNA_pol_Rpb1_7"/>
    <property type="match status" value="1"/>
</dbReference>
<dbReference type="Pfam" id="PF05001">
    <property type="entry name" value="RNA_pol_Rpb1_R"/>
    <property type="match status" value="24"/>
</dbReference>
<dbReference type="SMART" id="SM00663">
    <property type="entry name" value="RPOLA_N"/>
    <property type="match status" value="1"/>
</dbReference>
<dbReference type="SUPFAM" id="SSF64484">
    <property type="entry name" value="beta and beta-prime subunits of DNA dependent RNA-polymerase"/>
    <property type="match status" value="1"/>
</dbReference>
<dbReference type="PROSITE" id="PS00115">
    <property type="entry name" value="RNA_POL_II_REPEAT"/>
    <property type="match status" value="24"/>
</dbReference>
<keyword id="KW-0002">3D-structure</keyword>
<keyword id="KW-0238">DNA-binding</keyword>
<keyword id="KW-0240">DNA-directed RNA polymerase</keyword>
<keyword id="KW-1017">Isopeptide bond</keyword>
<keyword id="KW-0460">Magnesium</keyword>
<keyword id="KW-0479">Metal-binding</keyword>
<keyword id="KW-0548">Nucleotidyltransferase</keyword>
<keyword id="KW-0539">Nucleus</keyword>
<keyword id="KW-0597">Phosphoprotein</keyword>
<keyword id="KW-1185">Reference proteome</keyword>
<keyword id="KW-0677">Repeat</keyword>
<keyword id="KW-0804">Transcription</keyword>
<keyword id="KW-0808">Transferase</keyword>
<keyword id="KW-0832">Ubl conjugation</keyword>
<keyword id="KW-0862">Zinc</keyword>
<evidence type="ECO:0000250" key="1"/>
<evidence type="ECO:0000250" key="2">
    <source>
        <dbReference type="UniProtKB" id="P04050"/>
    </source>
</evidence>
<evidence type="ECO:0000256" key="3">
    <source>
        <dbReference type="SAM" id="MobiDB-lite"/>
    </source>
</evidence>
<evidence type="ECO:0000269" key="4">
    <source>
    </source>
</evidence>
<evidence type="ECO:0000305" key="5"/>
<evidence type="ECO:0007829" key="6">
    <source>
        <dbReference type="PDB" id="8QSZ"/>
    </source>
</evidence>
<reference key="1">
    <citation type="journal article" date="1991" name="Nucleic Acids Res.">
        <title>Cloning and sequence determination of the Schizosaccharomyces pombe rpb1 gene encoding the largest subunit of RNA polymerase II.</title>
        <authorList>
            <person name="Azuma Y."/>
            <person name="Yarnagishi M."/>
            <person name="Ueshima R."/>
            <person name="Ishihama A."/>
        </authorList>
    </citation>
    <scope>NUCLEOTIDE SEQUENCE [GENOMIC DNA]</scope>
    <source>
        <strain>972 / ATCC 24843</strain>
    </source>
</reference>
<reference key="2">
    <citation type="journal article" date="2002" name="Nature">
        <title>The genome sequence of Schizosaccharomyces pombe.</title>
        <authorList>
            <person name="Wood V."/>
            <person name="Gwilliam R."/>
            <person name="Rajandream M.A."/>
            <person name="Lyne M.H."/>
            <person name="Lyne R."/>
            <person name="Stewart A."/>
            <person name="Sgouros J.G."/>
            <person name="Peat N."/>
            <person name="Hayles J."/>
            <person name="Baker S.G."/>
            <person name="Basham D."/>
            <person name="Bowman S."/>
            <person name="Brooks K."/>
            <person name="Brown D."/>
            <person name="Brown S."/>
            <person name="Chillingworth T."/>
            <person name="Churcher C.M."/>
            <person name="Collins M."/>
            <person name="Connor R."/>
            <person name="Cronin A."/>
            <person name="Davis P."/>
            <person name="Feltwell T."/>
            <person name="Fraser A."/>
            <person name="Gentles S."/>
            <person name="Goble A."/>
            <person name="Hamlin N."/>
            <person name="Harris D.E."/>
            <person name="Hidalgo J."/>
            <person name="Hodgson G."/>
            <person name="Holroyd S."/>
            <person name="Hornsby T."/>
            <person name="Howarth S."/>
            <person name="Huckle E.J."/>
            <person name="Hunt S."/>
            <person name="Jagels K."/>
            <person name="James K.D."/>
            <person name="Jones L."/>
            <person name="Jones M."/>
            <person name="Leather S."/>
            <person name="McDonald S."/>
            <person name="McLean J."/>
            <person name="Mooney P."/>
            <person name="Moule S."/>
            <person name="Mungall K.L."/>
            <person name="Murphy L.D."/>
            <person name="Niblett D."/>
            <person name="Odell C."/>
            <person name="Oliver K."/>
            <person name="O'Neil S."/>
            <person name="Pearson D."/>
            <person name="Quail M.A."/>
            <person name="Rabbinowitsch E."/>
            <person name="Rutherford K.M."/>
            <person name="Rutter S."/>
            <person name="Saunders D."/>
            <person name="Seeger K."/>
            <person name="Sharp S."/>
            <person name="Skelton J."/>
            <person name="Simmonds M.N."/>
            <person name="Squares R."/>
            <person name="Squares S."/>
            <person name="Stevens K."/>
            <person name="Taylor K."/>
            <person name="Taylor R.G."/>
            <person name="Tivey A."/>
            <person name="Walsh S.V."/>
            <person name="Warren T."/>
            <person name="Whitehead S."/>
            <person name="Woodward J.R."/>
            <person name="Volckaert G."/>
            <person name="Aert R."/>
            <person name="Robben J."/>
            <person name="Grymonprez B."/>
            <person name="Weltjens I."/>
            <person name="Vanstreels E."/>
            <person name="Rieger M."/>
            <person name="Schaefer M."/>
            <person name="Mueller-Auer S."/>
            <person name="Gabel C."/>
            <person name="Fuchs M."/>
            <person name="Duesterhoeft A."/>
            <person name="Fritzc C."/>
            <person name="Holzer E."/>
            <person name="Moestl D."/>
            <person name="Hilbert H."/>
            <person name="Borzym K."/>
            <person name="Langer I."/>
            <person name="Beck A."/>
            <person name="Lehrach H."/>
            <person name="Reinhardt R."/>
            <person name="Pohl T.M."/>
            <person name="Eger P."/>
            <person name="Zimmermann W."/>
            <person name="Wedler H."/>
            <person name="Wambutt R."/>
            <person name="Purnelle B."/>
            <person name="Goffeau A."/>
            <person name="Cadieu E."/>
            <person name="Dreano S."/>
            <person name="Gloux S."/>
            <person name="Lelaure V."/>
            <person name="Mottier S."/>
            <person name="Galibert F."/>
            <person name="Aves S.J."/>
            <person name="Xiang Z."/>
            <person name="Hunt C."/>
            <person name="Moore K."/>
            <person name="Hurst S.M."/>
            <person name="Lucas M."/>
            <person name="Rochet M."/>
            <person name="Gaillardin C."/>
            <person name="Tallada V.A."/>
            <person name="Garzon A."/>
            <person name="Thode G."/>
            <person name="Daga R.R."/>
            <person name="Cruzado L."/>
            <person name="Jimenez J."/>
            <person name="Sanchez M."/>
            <person name="del Rey F."/>
            <person name="Benito J."/>
            <person name="Dominguez A."/>
            <person name="Revuelta J.L."/>
            <person name="Moreno S."/>
            <person name="Armstrong J."/>
            <person name="Forsburg S.L."/>
            <person name="Cerutti L."/>
            <person name="Lowe T."/>
            <person name="McCombie W.R."/>
            <person name="Paulsen I."/>
            <person name="Potashkin J."/>
            <person name="Shpakovski G.V."/>
            <person name="Ussery D."/>
            <person name="Barrell B.G."/>
            <person name="Nurse P."/>
        </authorList>
    </citation>
    <scope>NUCLEOTIDE SEQUENCE [LARGE SCALE GENOMIC DNA]</scope>
    <source>
        <strain>972 / ATCC 24843</strain>
    </source>
</reference>
<reference key="3">
    <citation type="journal article" date="2008" name="J. Proteome Res.">
        <title>Phosphoproteome analysis of fission yeast.</title>
        <authorList>
            <person name="Wilson-Grady J.T."/>
            <person name="Villen J."/>
            <person name="Gygi S.P."/>
        </authorList>
    </citation>
    <scope>PHOSPHORYLATION [LARGE SCALE ANALYSIS] AT SER-1489; SER-1499; SER-1506; SER-1529 AND TYR-1531</scope>
    <scope>IDENTIFICATION BY MASS SPECTROMETRY</scope>
</reference>
<name>RPB1_SCHPO</name>
<sequence>MSGIQFSPSSVPLRRVEEVQFGILSPEEIRSMSVAKIEFPETMDESGQRPRVGGLLDPRLGTIDRQFKCQTCGETMADCPGHFGHIELAKPVFHIGFLSKIKKILECVCWNCGKLKIDSSNPKFNDTQRYRDPKNRLNAVWNVCKTKMVCDTGLSAGSDNFDLSNPSANMGHGGCGAAQPTIRKDGLRLWGSWKRGKDESDLPEKRLLSPLEVHTIFTHISSEDLAHLGLNEQYARPDWMIITVLPVPPPSVRPSISVDGTSRGEDDLTHKLSDIIKANANVRRCEQEGAPAHIVSEYEQLLQFHVATYMDNEIAGQPQALQKSGRPLKSIRARLKGKEGRLRGNLMGKRVDFSARTVITGDPNLSLDELGVPRSIAKTLTYPETVTPYNIYQLQELVRNGPDEHPGAKYIIRDTGERIDLRYHKRAGDIPLRYGWRVERHIRDGDVVIFNRQPSLHKMSMMGHRIRVMPYSTFRLNLSVTSPYNADFDGDEMNMHVPQSEETRAEIQEITMVPKQIVSPQSNKPVMGIVQDTLAGVRKFSLRDNFLTRNAVMNIMLWVPDWDGILPPPVILKPKVLWTGKQILSLIIPKGINLIRDDDKQSLSNPTDSGMLIENGEIIYGVVDKKTVGASQGGLVHTIWKEKGPEICKGFFNGIQRVVNYWLLHNGFSIGIGDTIADADTMKEVTRTVKEARRQVAECIQDAQHNRLKPEPGMTLRESFEAKVSRILNQARDNAGRSAEHSLKDSNNVKQMVAAGSKGSFINISQMSACVGQQIVEGKRIPFGFKYRTLPHFPKDDDSPESRGFIENSYLRGLTPQEFFFHAMAGREGLIDTAVKTAETGYIQRRLVKAMEDVMVRYDGTVRNAMGDIIQFAYGEDGLDATLVEYQVFDSLRLSTKQFEKKYRIDLMEDRSLSLYMENSIENDSSVQDLLDEEYTQLVADRELLCKFIFPKGDARWPLPVNVQRIIQNALQIFHLEAKKPTDLLPSDIINGLNELIAKLTIFRGSDRITRDVQNNATLLFQILLRSKFAVKRVIMEYRLNKVAFEWIMGEVEARFQQAVVSPGEMVGTLAAQSIGEPATQMTLNTFHYAGVSSKNVTLGVPRLKEILNVAKNIKTPSLTIYLMPWIAANMDLAKNVQTQIEHTTLSTVTSATEIHYDPDPQDTVIEEDKDFVEAFFAIPDEEVEENLYKQSPWLLRLELDRAKMLDKKLSMSDVAGKIAESFERDLFTIWSEDNADKLIIRCRIIRDDDRKAEDDDNMIEEDVFLKTIEGHMLESISLRGVPNITRVYMMEHKIVRQIEDGTFERADEWVLETDGINLTEAMTVEGVDATRTYSNSFVEILQILGIEATRSALLKELRNVIEFDGSYVNYRHLALLCDVMTSRGHLMAITRHGINRAETGALMRCSFEETVEILMDAAASGEKDDCKGISENIMLGQLAPMGTGAFDIYLDQDMLMNYSLGTAVPTLAGSGMGTSQLPEGAGTPYERSPMVDSGFVGSPDAAAFSPLVQGGSEGREGFGDYGLLGAASPYKGVQSPGYTSPFSSAMSPGYGLTSPSYSPSSPGYSTSPAYMPSSPSYSPTSPSYSPTSPSYSPTSPSYSPTSPSYSATSPSYSPTSPSYSPTSPSYSPTSPSYSPTSPSYSPTSPSYSPTSPSYSPTSPSYSPTSPSYSPTSPSYSPTSPSYSPTSPSYSPTSPSYSPTSPSYSPTSPSYSPTSPSYSPTSPSYSPTSPSYSPTSPSYSPTSPSYSPTSPS</sequence>
<proteinExistence type="evidence at protein level"/>
<gene>
    <name type="primary">rpb1</name>
    <name type="ORF">SPBC28F2.12</name>
</gene>
<accession>P36594</accession>
<protein>
    <recommendedName>
        <fullName>DNA-directed RNA polymerase II subunit rpb1</fullName>
        <shortName>RNA polymerase II subunit 1</shortName>
        <shortName>RNA polymerase II subunit B1</shortName>
        <ecNumber>2.7.7.6</ecNumber>
    </recommendedName>
    <alternativeName>
        <fullName>DNA-directed RNA polymerase III largest subunit</fullName>
    </alternativeName>
</protein>
<organism>
    <name type="scientific">Schizosaccharomyces pombe (strain 972 / ATCC 24843)</name>
    <name type="common">Fission yeast</name>
    <dbReference type="NCBI Taxonomy" id="284812"/>
    <lineage>
        <taxon>Eukaryota</taxon>
        <taxon>Fungi</taxon>
        <taxon>Dikarya</taxon>
        <taxon>Ascomycota</taxon>
        <taxon>Taphrinomycotina</taxon>
        <taxon>Schizosaccharomycetes</taxon>
        <taxon>Schizosaccharomycetales</taxon>
        <taxon>Schizosaccharomycetaceae</taxon>
        <taxon>Schizosaccharomyces</taxon>
    </lineage>
</organism>